<dbReference type="EC" id="3.-.-.-"/>
<dbReference type="EMBL" id="CU329670">
    <property type="protein sequence ID" value="CAB63539.1"/>
    <property type="molecule type" value="Genomic_DNA"/>
</dbReference>
<dbReference type="PIR" id="T50053">
    <property type="entry name" value="T50053"/>
</dbReference>
<dbReference type="RefSeq" id="NP_594994.1">
    <property type="nucleotide sequence ID" value="NM_001020425.2"/>
</dbReference>
<dbReference type="SMR" id="Q9US38"/>
<dbReference type="FunCoup" id="Q9US38">
    <property type="interactions" value="84"/>
</dbReference>
<dbReference type="STRING" id="284812.Q9US38"/>
<dbReference type="ESTHER" id="schpo-este1">
    <property type="family name" value="Hormone-sensitive_lipase_like"/>
</dbReference>
<dbReference type="PaxDb" id="4896-SPAC1039.03.1"/>
<dbReference type="EnsemblFungi" id="SPAC1039.03.1">
    <property type="protein sequence ID" value="SPAC1039.03.1:pep"/>
    <property type="gene ID" value="SPAC1039.03"/>
</dbReference>
<dbReference type="KEGG" id="spo:2543023"/>
<dbReference type="PomBase" id="SPAC1039.03"/>
<dbReference type="VEuPathDB" id="FungiDB:SPAC1039.03"/>
<dbReference type="eggNOG" id="KOG1515">
    <property type="taxonomic scope" value="Eukaryota"/>
</dbReference>
<dbReference type="HOGENOM" id="CLU_012494_6_2_1"/>
<dbReference type="InParanoid" id="Q9US38"/>
<dbReference type="OMA" id="NLCVRGN"/>
<dbReference type="PhylomeDB" id="Q9US38"/>
<dbReference type="PRO" id="PR:Q9US38"/>
<dbReference type="Proteomes" id="UP000002485">
    <property type="component" value="Chromosome I"/>
</dbReference>
<dbReference type="GO" id="GO:0005829">
    <property type="term" value="C:cytosol"/>
    <property type="evidence" value="ECO:0007005"/>
    <property type="project" value="PomBase"/>
</dbReference>
<dbReference type="GO" id="GO:0005634">
    <property type="term" value="C:nucleus"/>
    <property type="evidence" value="ECO:0007005"/>
    <property type="project" value="PomBase"/>
</dbReference>
<dbReference type="GO" id="GO:0016787">
    <property type="term" value="F:hydrolase activity"/>
    <property type="evidence" value="ECO:0007669"/>
    <property type="project" value="UniProtKB-KW"/>
</dbReference>
<dbReference type="Gene3D" id="3.40.50.1820">
    <property type="entry name" value="alpha/beta hydrolase"/>
    <property type="match status" value="1"/>
</dbReference>
<dbReference type="InterPro" id="IPR013094">
    <property type="entry name" value="AB_hydrolase_3"/>
</dbReference>
<dbReference type="InterPro" id="IPR029058">
    <property type="entry name" value="AB_hydrolase_fold"/>
</dbReference>
<dbReference type="InterPro" id="IPR050300">
    <property type="entry name" value="GDXG_lipolytic_enzyme"/>
</dbReference>
<dbReference type="PANTHER" id="PTHR48081">
    <property type="entry name" value="AB HYDROLASE SUPERFAMILY PROTEIN C4A8.06C"/>
    <property type="match status" value="1"/>
</dbReference>
<dbReference type="PANTHER" id="PTHR48081:SF8">
    <property type="entry name" value="ALPHA_BETA HYDROLASE FOLD-3 DOMAIN-CONTAINING PROTEIN-RELATED"/>
    <property type="match status" value="1"/>
</dbReference>
<dbReference type="Pfam" id="PF07859">
    <property type="entry name" value="Abhydrolase_3"/>
    <property type="match status" value="1"/>
</dbReference>
<dbReference type="SUPFAM" id="SSF53474">
    <property type="entry name" value="alpha/beta-Hydrolases"/>
    <property type="match status" value="1"/>
</dbReference>
<reference key="1">
    <citation type="journal article" date="2002" name="Nature">
        <title>The genome sequence of Schizosaccharomyces pombe.</title>
        <authorList>
            <person name="Wood V."/>
            <person name="Gwilliam R."/>
            <person name="Rajandream M.A."/>
            <person name="Lyne M.H."/>
            <person name="Lyne R."/>
            <person name="Stewart A."/>
            <person name="Sgouros J.G."/>
            <person name="Peat N."/>
            <person name="Hayles J."/>
            <person name="Baker S.G."/>
            <person name="Basham D."/>
            <person name="Bowman S."/>
            <person name="Brooks K."/>
            <person name="Brown D."/>
            <person name="Brown S."/>
            <person name="Chillingworth T."/>
            <person name="Churcher C.M."/>
            <person name="Collins M."/>
            <person name="Connor R."/>
            <person name="Cronin A."/>
            <person name="Davis P."/>
            <person name="Feltwell T."/>
            <person name="Fraser A."/>
            <person name="Gentles S."/>
            <person name="Goble A."/>
            <person name="Hamlin N."/>
            <person name="Harris D.E."/>
            <person name="Hidalgo J."/>
            <person name="Hodgson G."/>
            <person name="Holroyd S."/>
            <person name="Hornsby T."/>
            <person name="Howarth S."/>
            <person name="Huckle E.J."/>
            <person name="Hunt S."/>
            <person name="Jagels K."/>
            <person name="James K.D."/>
            <person name="Jones L."/>
            <person name="Jones M."/>
            <person name="Leather S."/>
            <person name="McDonald S."/>
            <person name="McLean J."/>
            <person name="Mooney P."/>
            <person name="Moule S."/>
            <person name="Mungall K.L."/>
            <person name="Murphy L.D."/>
            <person name="Niblett D."/>
            <person name="Odell C."/>
            <person name="Oliver K."/>
            <person name="O'Neil S."/>
            <person name="Pearson D."/>
            <person name="Quail M.A."/>
            <person name="Rabbinowitsch E."/>
            <person name="Rutherford K.M."/>
            <person name="Rutter S."/>
            <person name="Saunders D."/>
            <person name="Seeger K."/>
            <person name="Sharp S."/>
            <person name="Skelton J."/>
            <person name="Simmonds M.N."/>
            <person name="Squares R."/>
            <person name="Squares S."/>
            <person name="Stevens K."/>
            <person name="Taylor K."/>
            <person name="Taylor R.G."/>
            <person name="Tivey A."/>
            <person name="Walsh S.V."/>
            <person name="Warren T."/>
            <person name="Whitehead S."/>
            <person name="Woodward J.R."/>
            <person name="Volckaert G."/>
            <person name="Aert R."/>
            <person name="Robben J."/>
            <person name="Grymonprez B."/>
            <person name="Weltjens I."/>
            <person name="Vanstreels E."/>
            <person name="Rieger M."/>
            <person name="Schaefer M."/>
            <person name="Mueller-Auer S."/>
            <person name="Gabel C."/>
            <person name="Fuchs M."/>
            <person name="Duesterhoeft A."/>
            <person name="Fritzc C."/>
            <person name="Holzer E."/>
            <person name="Moestl D."/>
            <person name="Hilbert H."/>
            <person name="Borzym K."/>
            <person name="Langer I."/>
            <person name="Beck A."/>
            <person name="Lehrach H."/>
            <person name="Reinhardt R."/>
            <person name="Pohl T.M."/>
            <person name="Eger P."/>
            <person name="Zimmermann W."/>
            <person name="Wedler H."/>
            <person name="Wambutt R."/>
            <person name="Purnelle B."/>
            <person name="Goffeau A."/>
            <person name="Cadieu E."/>
            <person name="Dreano S."/>
            <person name="Gloux S."/>
            <person name="Lelaure V."/>
            <person name="Mottier S."/>
            <person name="Galibert F."/>
            <person name="Aves S.J."/>
            <person name="Xiang Z."/>
            <person name="Hunt C."/>
            <person name="Moore K."/>
            <person name="Hurst S.M."/>
            <person name="Lucas M."/>
            <person name="Rochet M."/>
            <person name="Gaillardin C."/>
            <person name="Tallada V.A."/>
            <person name="Garzon A."/>
            <person name="Thode G."/>
            <person name="Daga R.R."/>
            <person name="Cruzado L."/>
            <person name="Jimenez J."/>
            <person name="Sanchez M."/>
            <person name="del Rey F."/>
            <person name="Benito J."/>
            <person name="Dominguez A."/>
            <person name="Revuelta J.L."/>
            <person name="Moreno S."/>
            <person name="Armstrong J."/>
            <person name="Forsburg S.L."/>
            <person name="Cerutti L."/>
            <person name="Lowe T."/>
            <person name="McCombie W.R."/>
            <person name="Paulsen I."/>
            <person name="Potashkin J."/>
            <person name="Shpakovski G.V."/>
            <person name="Ussery D."/>
            <person name="Barrell B.G."/>
            <person name="Nurse P."/>
        </authorList>
    </citation>
    <scope>NUCLEOTIDE SEQUENCE [LARGE SCALE GENOMIC DNA]</scope>
    <source>
        <strain>972 / ATCC 24843</strain>
    </source>
</reference>
<reference key="2">
    <citation type="journal article" date="2006" name="Nat. Biotechnol.">
        <title>ORFeome cloning and global analysis of protein localization in the fission yeast Schizosaccharomyces pombe.</title>
        <authorList>
            <person name="Matsuyama A."/>
            <person name="Arai R."/>
            <person name="Yashiroda Y."/>
            <person name="Shirai A."/>
            <person name="Kamata A."/>
            <person name="Sekido S."/>
            <person name="Kobayashi Y."/>
            <person name="Hashimoto A."/>
            <person name="Hamamoto M."/>
            <person name="Hiraoka Y."/>
            <person name="Horinouchi S."/>
            <person name="Yoshida M."/>
        </authorList>
    </citation>
    <scope>SUBCELLULAR LOCATION [LARGE SCALE ANALYSIS]</scope>
</reference>
<organism>
    <name type="scientific">Schizosaccharomyces pombe (strain 972 / ATCC 24843)</name>
    <name type="common">Fission yeast</name>
    <dbReference type="NCBI Taxonomy" id="284812"/>
    <lineage>
        <taxon>Eukaryota</taxon>
        <taxon>Fungi</taxon>
        <taxon>Dikarya</taxon>
        <taxon>Ascomycota</taxon>
        <taxon>Taphrinomycotina</taxon>
        <taxon>Schizosaccharomycetes</taxon>
        <taxon>Schizosaccharomycetales</taxon>
        <taxon>Schizosaccharomycetaceae</taxon>
        <taxon>Schizosaccharomyces</taxon>
    </lineage>
</organism>
<comment type="subcellular location">
    <subcellularLocation>
        <location evidence="1">Cytoplasm</location>
    </subcellularLocation>
    <subcellularLocation>
        <location evidence="1">Nucleus</location>
    </subcellularLocation>
</comment>
<comment type="similarity">
    <text evidence="2">Belongs to the AB hydrolase superfamily.</text>
</comment>
<keyword id="KW-0963">Cytoplasm</keyword>
<keyword id="KW-0378">Hydrolase</keyword>
<keyword id="KW-0539">Nucleus</keyword>
<keyword id="KW-1185">Reference proteome</keyword>
<proteinExistence type="inferred from homology"/>
<protein>
    <recommendedName>
        <fullName>AB hydrolase superfamily protein C1039.03</fullName>
        <ecNumber>3.-.-.-</ecNumber>
    </recommendedName>
</protein>
<evidence type="ECO:0000269" key="1">
    <source>
    </source>
</evidence>
<evidence type="ECO:0000305" key="2"/>
<sequence length="341" mass="37365">MSQTTTETIIPLDSSVKDKLDPEYVNFYNKYVCSNLPIVKTHTYPVDFLRNNGNVMPGQSELLPVESTEDITIPRKHTKAPSGVPSRIFRPHGTAPEGGWPCFLWFHGGGWVLGNINTENSFATHMCEQAKCVVVNVDYRLAPEDPFPACIDDGWEALLYCYENADTLGINPNKIAVGGSSAGGNIAAVLSHKVAASPANFPPLVLQLLVVPVCDNTANAKTHKSWELFENTPQLPAAKMMWYRRHYLPNEKDWSNPEASPFFYPDSSFKNVCPALICAAGCDVLSSEAIAYNEKLTKAGVESTIKIYEGCPHPVMAMDAVLEKGRILNKDATNALLAAFA</sequence>
<name>YFZ3_SCHPO</name>
<gene>
    <name type="ORF">SPAC1039.03</name>
</gene>
<accession>Q9US38</accession>
<feature type="chain" id="PRO_0000363393" description="AB hydrolase superfamily protein C1039.03">
    <location>
        <begin position="1"/>
        <end position="341"/>
    </location>
</feature>